<accession>Q3AUU9</accession>
<proteinExistence type="inferred from homology"/>
<keyword id="KW-0067">ATP-binding</keyword>
<keyword id="KW-0963">Cytoplasm</keyword>
<keyword id="KW-0436">Ligase</keyword>
<keyword id="KW-0547">Nucleotide-binding</keyword>
<keyword id="KW-0658">Purine biosynthesis</keyword>
<keyword id="KW-1185">Reference proteome</keyword>
<sequence>MDYKSAGVDVEAGRAFVQRIKASVEATHRPEVVGGLGGFGGLMRLPTGLRKPLLVSGTDGVGTKLELAQNHHCHHGVGIDLVAMCVNDVITSGAAPLFFLDYMATGALSPAAMAEVVEGIADGCRQSGCALLGGETAEMPGFYPQGRYDLAGFCVAVVEEDDLIDGRSISPGDQIIGIASSGVHSNGFSLVRKVLEKAGINENSQYGPDNRRLLNDLLAPTTLYASLVQELLSNAIKIHGMAHITGGGLPENLPRCLPEGMTAKIEAEAWPRSPLFQWLQSAGAIPERDLWHTFNMGIGFCLVVPKEAEQTALDVCHLNNHQAWVIGEVLKTPPGEHSALQGLPS</sequence>
<dbReference type="EC" id="6.3.3.1" evidence="1"/>
<dbReference type="EMBL" id="CP000097">
    <property type="protein sequence ID" value="ABB26873.1"/>
    <property type="molecule type" value="Genomic_DNA"/>
</dbReference>
<dbReference type="RefSeq" id="WP_011360675.1">
    <property type="nucleotide sequence ID" value="NC_007513.1"/>
</dbReference>
<dbReference type="SMR" id="Q3AUU9"/>
<dbReference type="STRING" id="316279.Syncc9902_1916"/>
<dbReference type="KEGG" id="sye:Syncc9902_1916"/>
<dbReference type="eggNOG" id="COG0150">
    <property type="taxonomic scope" value="Bacteria"/>
</dbReference>
<dbReference type="HOGENOM" id="CLU_047116_0_0_3"/>
<dbReference type="OrthoDB" id="9802507at2"/>
<dbReference type="UniPathway" id="UPA00074">
    <property type="reaction ID" value="UER00129"/>
</dbReference>
<dbReference type="Proteomes" id="UP000002712">
    <property type="component" value="Chromosome"/>
</dbReference>
<dbReference type="GO" id="GO:0005829">
    <property type="term" value="C:cytosol"/>
    <property type="evidence" value="ECO:0007669"/>
    <property type="project" value="TreeGrafter"/>
</dbReference>
<dbReference type="GO" id="GO:0005524">
    <property type="term" value="F:ATP binding"/>
    <property type="evidence" value="ECO:0007669"/>
    <property type="project" value="UniProtKB-KW"/>
</dbReference>
<dbReference type="GO" id="GO:0004637">
    <property type="term" value="F:phosphoribosylamine-glycine ligase activity"/>
    <property type="evidence" value="ECO:0007669"/>
    <property type="project" value="TreeGrafter"/>
</dbReference>
<dbReference type="GO" id="GO:0004641">
    <property type="term" value="F:phosphoribosylformylglycinamidine cyclo-ligase activity"/>
    <property type="evidence" value="ECO:0007669"/>
    <property type="project" value="UniProtKB-UniRule"/>
</dbReference>
<dbReference type="GO" id="GO:0006189">
    <property type="term" value="P:'de novo' IMP biosynthetic process"/>
    <property type="evidence" value="ECO:0007669"/>
    <property type="project" value="UniProtKB-UniRule"/>
</dbReference>
<dbReference type="GO" id="GO:0046084">
    <property type="term" value="P:adenine biosynthetic process"/>
    <property type="evidence" value="ECO:0007669"/>
    <property type="project" value="TreeGrafter"/>
</dbReference>
<dbReference type="CDD" id="cd02196">
    <property type="entry name" value="PurM"/>
    <property type="match status" value="1"/>
</dbReference>
<dbReference type="FunFam" id="3.30.1330.10:FF:000001">
    <property type="entry name" value="Phosphoribosylformylglycinamidine cyclo-ligase"/>
    <property type="match status" value="1"/>
</dbReference>
<dbReference type="FunFam" id="3.90.650.10:FF:000011">
    <property type="entry name" value="Phosphoribosylformylglycinamidine cyclo-ligase"/>
    <property type="match status" value="1"/>
</dbReference>
<dbReference type="Gene3D" id="3.90.650.10">
    <property type="entry name" value="PurM-like C-terminal domain"/>
    <property type="match status" value="1"/>
</dbReference>
<dbReference type="Gene3D" id="3.30.1330.10">
    <property type="entry name" value="PurM-like, N-terminal domain"/>
    <property type="match status" value="1"/>
</dbReference>
<dbReference type="HAMAP" id="MF_00741">
    <property type="entry name" value="AIRS"/>
    <property type="match status" value="1"/>
</dbReference>
<dbReference type="InterPro" id="IPR010918">
    <property type="entry name" value="PurM-like_C_dom"/>
</dbReference>
<dbReference type="InterPro" id="IPR036676">
    <property type="entry name" value="PurM-like_C_sf"/>
</dbReference>
<dbReference type="InterPro" id="IPR016188">
    <property type="entry name" value="PurM-like_N"/>
</dbReference>
<dbReference type="InterPro" id="IPR036921">
    <property type="entry name" value="PurM-like_N_sf"/>
</dbReference>
<dbReference type="InterPro" id="IPR004733">
    <property type="entry name" value="PurM_cligase"/>
</dbReference>
<dbReference type="NCBIfam" id="TIGR00878">
    <property type="entry name" value="purM"/>
    <property type="match status" value="1"/>
</dbReference>
<dbReference type="PANTHER" id="PTHR10520:SF12">
    <property type="entry name" value="TRIFUNCTIONAL PURINE BIOSYNTHETIC PROTEIN ADENOSINE-3"/>
    <property type="match status" value="1"/>
</dbReference>
<dbReference type="PANTHER" id="PTHR10520">
    <property type="entry name" value="TRIFUNCTIONAL PURINE BIOSYNTHETIC PROTEIN ADENOSINE-3-RELATED"/>
    <property type="match status" value="1"/>
</dbReference>
<dbReference type="Pfam" id="PF00586">
    <property type="entry name" value="AIRS"/>
    <property type="match status" value="1"/>
</dbReference>
<dbReference type="Pfam" id="PF02769">
    <property type="entry name" value="AIRS_C"/>
    <property type="match status" value="1"/>
</dbReference>
<dbReference type="SUPFAM" id="SSF56042">
    <property type="entry name" value="PurM C-terminal domain-like"/>
    <property type="match status" value="1"/>
</dbReference>
<dbReference type="SUPFAM" id="SSF55326">
    <property type="entry name" value="PurM N-terminal domain-like"/>
    <property type="match status" value="1"/>
</dbReference>
<reference key="1">
    <citation type="submission" date="2005-08" db="EMBL/GenBank/DDBJ databases">
        <title>Complete sequence of Synechococcus sp. CC9902.</title>
        <authorList>
            <person name="Copeland A."/>
            <person name="Lucas S."/>
            <person name="Lapidus A."/>
            <person name="Barry K."/>
            <person name="Detter J.C."/>
            <person name="Glavina T."/>
            <person name="Hammon N."/>
            <person name="Israni S."/>
            <person name="Pitluck S."/>
            <person name="Martinez M."/>
            <person name="Schmutz J."/>
            <person name="Larimer F."/>
            <person name="Land M."/>
            <person name="Kyrpides N."/>
            <person name="Ivanova N."/>
            <person name="Richardson P."/>
        </authorList>
    </citation>
    <scope>NUCLEOTIDE SEQUENCE [LARGE SCALE GENOMIC DNA]</scope>
    <source>
        <strain>CC9902</strain>
    </source>
</reference>
<name>PUR5_SYNS9</name>
<gene>
    <name evidence="1" type="primary">purM</name>
    <name type="ordered locus">Syncc9902_1916</name>
</gene>
<protein>
    <recommendedName>
        <fullName evidence="1">Phosphoribosylformylglycinamidine cyclo-ligase</fullName>
        <ecNumber evidence="1">6.3.3.1</ecNumber>
    </recommendedName>
    <alternativeName>
        <fullName evidence="1">AIR synthase</fullName>
    </alternativeName>
    <alternativeName>
        <fullName evidence="1">AIRS</fullName>
    </alternativeName>
    <alternativeName>
        <fullName evidence="1">Phosphoribosyl-aminoimidazole synthetase</fullName>
    </alternativeName>
</protein>
<comment type="catalytic activity">
    <reaction evidence="1">
        <text>2-formamido-N(1)-(5-O-phospho-beta-D-ribosyl)acetamidine + ATP = 5-amino-1-(5-phospho-beta-D-ribosyl)imidazole + ADP + phosphate + H(+)</text>
        <dbReference type="Rhea" id="RHEA:23032"/>
        <dbReference type="ChEBI" id="CHEBI:15378"/>
        <dbReference type="ChEBI" id="CHEBI:30616"/>
        <dbReference type="ChEBI" id="CHEBI:43474"/>
        <dbReference type="ChEBI" id="CHEBI:137981"/>
        <dbReference type="ChEBI" id="CHEBI:147287"/>
        <dbReference type="ChEBI" id="CHEBI:456216"/>
        <dbReference type="EC" id="6.3.3.1"/>
    </reaction>
</comment>
<comment type="pathway">
    <text evidence="1">Purine metabolism; IMP biosynthesis via de novo pathway; 5-amino-1-(5-phospho-D-ribosyl)imidazole from N(2)-formyl-N(1)-(5-phospho-D-ribosyl)glycinamide: step 2/2.</text>
</comment>
<comment type="subcellular location">
    <subcellularLocation>
        <location evidence="1">Cytoplasm</location>
    </subcellularLocation>
</comment>
<comment type="similarity">
    <text evidence="1">Belongs to the AIR synthase family.</text>
</comment>
<evidence type="ECO:0000255" key="1">
    <source>
        <dbReference type="HAMAP-Rule" id="MF_00741"/>
    </source>
</evidence>
<feature type="chain" id="PRO_0000258423" description="Phosphoribosylformylglycinamidine cyclo-ligase">
    <location>
        <begin position="1"/>
        <end position="345"/>
    </location>
</feature>
<organism>
    <name type="scientific">Synechococcus sp. (strain CC9902)</name>
    <dbReference type="NCBI Taxonomy" id="316279"/>
    <lineage>
        <taxon>Bacteria</taxon>
        <taxon>Bacillati</taxon>
        <taxon>Cyanobacteriota</taxon>
        <taxon>Cyanophyceae</taxon>
        <taxon>Synechococcales</taxon>
        <taxon>Synechococcaceae</taxon>
        <taxon>Synechococcus</taxon>
    </lineage>
</organism>